<keyword id="KW-0548">Nucleotidyltransferase</keyword>
<keyword id="KW-0694">RNA-binding</keyword>
<keyword id="KW-0698">rRNA processing</keyword>
<keyword id="KW-0808">Transferase</keyword>
<keyword id="KW-0819">tRNA processing</keyword>
<keyword id="KW-0820">tRNA-binding</keyword>
<protein>
    <recommendedName>
        <fullName evidence="1">Ribonuclease PH</fullName>
        <shortName evidence="1">RNase PH</shortName>
        <ecNumber evidence="1">2.7.7.56</ecNumber>
    </recommendedName>
    <alternativeName>
        <fullName evidence="1">tRNA nucleotidyltransferase</fullName>
    </alternativeName>
</protein>
<gene>
    <name evidence="1" type="primary">rph</name>
    <name type="ordered locus">BMA10247_1966</name>
</gene>
<accession>A3MML4</accession>
<sequence length="243" mass="26052">MTNSSLRPSGRRADQLRDVRITRHYTKHAEGAVLVEFGDTKVICTASVAERVPEFLRERGQGWLTAEYGMLPRATHTRSDREAARGKQTGRTQEIQRLIGRALRAVFDLNALGPRTLHLDCDVIQADGGTRTASITGAFVAAHDAVTKLVAAGRIARSPITDYVAAISVGVFGGTPVLDLDYDEDSACDTDMNVVMTGAGGFVEVQGTAEGAPFSRTEMNALLDLAQAGIGELVRLQRAALEA</sequence>
<dbReference type="EC" id="2.7.7.56" evidence="1"/>
<dbReference type="EMBL" id="CP000548">
    <property type="protein sequence ID" value="ABO05154.1"/>
    <property type="molecule type" value="Genomic_DNA"/>
</dbReference>
<dbReference type="RefSeq" id="WP_004186400.1">
    <property type="nucleotide sequence ID" value="NZ_CP007802.1"/>
</dbReference>
<dbReference type="SMR" id="A3MML4"/>
<dbReference type="GeneID" id="93061158"/>
<dbReference type="KEGG" id="bmaz:BM44_1250"/>
<dbReference type="KEGG" id="bmn:BMA10247_1966"/>
<dbReference type="PATRIC" id="fig|320389.8.peg.1396"/>
<dbReference type="GO" id="GO:0000175">
    <property type="term" value="F:3'-5'-RNA exonuclease activity"/>
    <property type="evidence" value="ECO:0007669"/>
    <property type="project" value="UniProtKB-UniRule"/>
</dbReference>
<dbReference type="GO" id="GO:0000049">
    <property type="term" value="F:tRNA binding"/>
    <property type="evidence" value="ECO:0007669"/>
    <property type="project" value="UniProtKB-UniRule"/>
</dbReference>
<dbReference type="GO" id="GO:0009022">
    <property type="term" value="F:tRNA nucleotidyltransferase activity"/>
    <property type="evidence" value="ECO:0007669"/>
    <property type="project" value="UniProtKB-UniRule"/>
</dbReference>
<dbReference type="GO" id="GO:0016075">
    <property type="term" value="P:rRNA catabolic process"/>
    <property type="evidence" value="ECO:0007669"/>
    <property type="project" value="UniProtKB-UniRule"/>
</dbReference>
<dbReference type="GO" id="GO:0006364">
    <property type="term" value="P:rRNA processing"/>
    <property type="evidence" value="ECO:0007669"/>
    <property type="project" value="UniProtKB-KW"/>
</dbReference>
<dbReference type="GO" id="GO:0008033">
    <property type="term" value="P:tRNA processing"/>
    <property type="evidence" value="ECO:0007669"/>
    <property type="project" value="UniProtKB-UniRule"/>
</dbReference>
<dbReference type="CDD" id="cd11362">
    <property type="entry name" value="RNase_PH_bact"/>
    <property type="match status" value="1"/>
</dbReference>
<dbReference type="FunFam" id="3.30.230.70:FF:000003">
    <property type="entry name" value="Ribonuclease PH"/>
    <property type="match status" value="1"/>
</dbReference>
<dbReference type="Gene3D" id="3.30.230.70">
    <property type="entry name" value="GHMP Kinase, N-terminal domain"/>
    <property type="match status" value="1"/>
</dbReference>
<dbReference type="HAMAP" id="MF_00564">
    <property type="entry name" value="RNase_PH"/>
    <property type="match status" value="1"/>
</dbReference>
<dbReference type="InterPro" id="IPR001247">
    <property type="entry name" value="ExoRNase_PH_dom1"/>
</dbReference>
<dbReference type="InterPro" id="IPR015847">
    <property type="entry name" value="ExoRNase_PH_dom2"/>
</dbReference>
<dbReference type="InterPro" id="IPR036345">
    <property type="entry name" value="ExoRNase_PH_dom2_sf"/>
</dbReference>
<dbReference type="InterPro" id="IPR027408">
    <property type="entry name" value="PNPase/RNase_PH_dom_sf"/>
</dbReference>
<dbReference type="InterPro" id="IPR020568">
    <property type="entry name" value="Ribosomal_Su5_D2-typ_SF"/>
</dbReference>
<dbReference type="InterPro" id="IPR050080">
    <property type="entry name" value="RNase_PH"/>
</dbReference>
<dbReference type="InterPro" id="IPR002381">
    <property type="entry name" value="RNase_PH_bac-type"/>
</dbReference>
<dbReference type="InterPro" id="IPR018336">
    <property type="entry name" value="RNase_PH_CS"/>
</dbReference>
<dbReference type="NCBIfam" id="TIGR01966">
    <property type="entry name" value="RNasePH"/>
    <property type="match status" value="1"/>
</dbReference>
<dbReference type="PANTHER" id="PTHR11953">
    <property type="entry name" value="EXOSOME COMPLEX COMPONENT"/>
    <property type="match status" value="1"/>
</dbReference>
<dbReference type="PANTHER" id="PTHR11953:SF0">
    <property type="entry name" value="EXOSOME COMPLEX COMPONENT RRP41"/>
    <property type="match status" value="1"/>
</dbReference>
<dbReference type="Pfam" id="PF01138">
    <property type="entry name" value="RNase_PH"/>
    <property type="match status" value="1"/>
</dbReference>
<dbReference type="Pfam" id="PF03725">
    <property type="entry name" value="RNase_PH_C"/>
    <property type="match status" value="1"/>
</dbReference>
<dbReference type="SUPFAM" id="SSF55666">
    <property type="entry name" value="Ribonuclease PH domain 2-like"/>
    <property type="match status" value="1"/>
</dbReference>
<dbReference type="SUPFAM" id="SSF54211">
    <property type="entry name" value="Ribosomal protein S5 domain 2-like"/>
    <property type="match status" value="1"/>
</dbReference>
<dbReference type="PROSITE" id="PS01277">
    <property type="entry name" value="RIBONUCLEASE_PH"/>
    <property type="match status" value="1"/>
</dbReference>
<name>RNPH_BURM7</name>
<feature type="chain" id="PRO_1000024786" description="Ribonuclease PH">
    <location>
        <begin position="1"/>
        <end position="243"/>
    </location>
</feature>
<feature type="binding site" evidence="1">
    <location>
        <position position="91"/>
    </location>
    <ligand>
        <name>phosphate</name>
        <dbReference type="ChEBI" id="CHEBI:43474"/>
        <note>substrate</note>
    </ligand>
</feature>
<feature type="binding site" evidence="1">
    <location>
        <begin position="129"/>
        <end position="131"/>
    </location>
    <ligand>
        <name>phosphate</name>
        <dbReference type="ChEBI" id="CHEBI:43474"/>
        <note>substrate</note>
    </ligand>
</feature>
<organism>
    <name type="scientific">Burkholderia mallei (strain NCTC 10247)</name>
    <dbReference type="NCBI Taxonomy" id="320389"/>
    <lineage>
        <taxon>Bacteria</taxon>
        <taxon>Pseudomonadati</taxon>
        <taxon>Pseudomonadota</taxon>
        <taxon>Betaproteobacteria</taxon>
        <taxon>Burkholderiales</taxon>
        <taxon>Burkholderiaceae</taxon>
        <taxon>Burkholderia</taxon>
        <taxon>pseudomallei group</taxon>
    </lineage>
</organism>
<comment type="function">
    <text evidence="1">Phosphorolytic 3'-5' exoribonuclease that plays an important role in tRNA 3'-end maturation. Removes nucleotide residues following the 3'-CCA terminus of tRNAs; can also add nucleotides to the ends of RNA molecules by using nucleoside diphosphates as substrates, but this may not be physiologically important. Probably plays a role in initiation of 16S rRNA degradation (leading to ribosome degradation) during starvation.</text>
</comment>
<comment type="catalytic activity">
    <reaction evidence="1">
        <text>tRNA(n+1) + phosphate = tRNA(n) + a ribonucleoside 5'-diphosphate</text>
        <dbReference type="Rhea" id="RHEA:10628"/>
        <dbReference type="Rhea" id="RHEA-COMP:17343"/>
        <dbReference type="Rhea" id="RHEA-COMP:17344"/>
        <dbReference type="ChEBI" id="CHEBI:43474"/>
        <dbReference type="ChEBI" id="CHEBI:57930"/>
        <dbReference type="ChEBI" id="CHEBI:173114"/>
        <dbReference type="EC" id="2.7.7.56"/>
    </reaction>
</comment>
<comment type="subunit">
    <text evidence="1">Homohexameric ring arranged as a trimer of dimers.</text>
</comment>
<comment type="similarity">
    <text evidence="1">Belongs to the RNase PH family.</text>
</comment>
<reference key="1">
    <citation type="journal article" date="2010" name="Genome Biol. Evol.">
        <title>Continuing evolution of Burkholderia mallei through genome reduction and large-scale rearrangements.</title>
        <authorList>
            <person name="Losada L."/>
            <person name="Ronning C.M."/>
            <person name="DeShazer D."/>
            <person name="Woods D."/>
            <person name="Fedorova N."/>
            <person name="Kim H.S."/>
            <person name="Shabalina S.A."/>
            <person name="Pearson T.R."/>
            <person name="Brinkac L."/>
            <person name="Tan P."/>
            <person name="Nandi T."/>
            <person name="Crabtree J."/>
            <person name="Badger J."/>
            <person name="Beckstrom-Sternberg S."/>
            <person name="Saqib M."/>
            <person name="Schutzer S.E."/>
            <person name="Keim P."/>
            <person name="Nierman W.C."/>
        </authorList>
    </citation>
    <scope>NUCLEOTIDE SEQUENCE [LARGE SCALE GENOMIC DNA]</scope>
    <source>
        <strain>NCTC 10247</strain>
    </source>
</reference>
<evidence type="ECO:0000255" key="1">
    <source>
        <dbReference type="HAMAP-Rule" id="MF_00564"/>
    </source>
</evidence>
<proteinExistence type="inferred from homology"/>